<protein>
    <recommendedName>
        <fullName evidence="1">NAD(P)H-quinone oxidoreductase subunit I, chloroplastic</fullName>
        <ecNumber evidence="1">7.1.1.-</ecNumber>
    </recommendedName>
    <alternativeName>
        <fullName evidence="1">NAD(P)H dehydrogenase subunit I</fullName>
        <shortName evidence="1">NDH subunit I</shortName>
    </alternativeName>
    <alternativeName>
        <fullName evidence="1">NADH-plastoquinone oxidoreductase subunit I</fullName>
    </alternativeName>
</protein>
<organism>
    <name type="scientific">Varilla mexicana</name>
    <name type="common">Mexican varilla</name>
    <dbReference type="NCBI Taxonomy" id="176586"/>
    <lineage>
        <taxon>Eukaryota</taxon>
        <taxon>Viridiplantae</taxon>
        <taxon>Streptophyta</taxon>
        <taxon>Embryophyta</taxon>
        <taxon>Tracheophyta</taxon>
        <taxon>Spermatophyta</taxon>
        <taxon>Magnoliopsida</taxon>
        <taxon>eudicotyledons</taxon>
        <taxon>Gunneridae</taxon>
        <taxon>Pentapetalae</taxon>
        <taxon>asterids</taxon>
        <taxon>campanulids</taxon>
        <taxon>Asterales</taxon>
        <taxon>Asteraceae</taxon>
        <taxon>Asteroideae</taxon>
        <taxon>Heliantheae alliance</taxon>
        <taxon>Tageteae</taxon>
        <taxon>Varilla</taxon>
    </lineage>
</organism>
<reference key="1">
    <citation type="submission" date="2003-01" db="EMBL/GenBank/DDBJ databases">
        <title>Chloroplast DNA phylogeny of tribe Heliantheae (Asteraceae).</title>
        <authorList>
            <person name="Panero J.L."/>
            <person name="Baldwin B.G."/>
            <person name="Schilling E.E."/>
            <person name="Clevinger J.A."/>
        </authorList>
    </citation>
    <scope>NUCLEOTIDE SEQUENCE [LARGE SCALE GENOMIC DNA]</scope>
</reference>
<evidence type="ECO:0000255" key="1">
    <source>
        <dbReference type="HAMAP-Rule" id="MF_01351"/>
    </source>
</evidence>
<dbReference type="EC" id="7.1.1.-" evidence="1"/>
<dbReference type="EMBL" id="AF383865">
    <property type="protein sequence ID" value="AAN61806.1"/>
    <property type="molecule type" value="Genomic_DNA"/>
</dbReference>
<dbReference type="SMR" id="Q8HVJ8"/>
<dbReference type="GO" id="GO:0009535">
    <property type="term" value="C:chloroplast thylakoid membrane"/>
    <property type="evidence" value="ECO:0007669"/>
    <property type="project" value="UniProtKB-SubCell"/>
</dbReference>
<dbReference type="GO" id="GO:0051539">
    <property type="term" value="F:4 iron, 4 sulfur cluster binding"/>
    <property type="evidence" value="ECO:0007669"/>
    <property type="project" value="UniProtKB-KW"/>
</dbReference>
<dbReference type="GO" id="GO:0005506">
    <property type="term" value="F:iron ion binding"/>
    <property type="evidence" value="ECO:0007669"/>
    <property type="project" value="UniProtKB-UniRule"/>
</dbReference>
<dbReference type="GO" id="GO:0008137">
    <property type="term" value="F:NADH dehydrogenase (ubiquinone) activity"/>
    <property type="evidence" value="ECO:0007669"/>
    <property type="project" value="InterPro"/>
</dbReference>
<dbReference type="GO" id="GO:0048038">
    <property type="term" value="F:quinone binding"/>
    <property type="evidence" value="ECO:0007669"/>
    <property type="project" value="UniProtKB-KW"/>
</dbReference>
<dbReference type="GO" id="GO:0019684">
    <property type="term" value="P:photosynthesis, light reaction"/>
    <property type="evidence" value="ECO:0007669"/>
    <property type="project" value="UniProtKB-UniRule"/>
</dbReference>
<dbReference type="FunFam" id="3.30.70.3270:FF:000006">
    <property type="entry name" value="NAD(P)H-quinone oxidoreductase subunit I, chloroplastic"/>
    <property type="match status" value="1"/>
</dbReference>
<dbReference type="Gene3D" id="3.30.70.3270">
    <property type="match status" value="1"/>
</dbReference>
<dbReference type="HAMAP" id="MF_01351">
    <property type="entry name" value="NDH1_NuoI"/>
    <property type="match status" value="1"/>
</dbReference>
<dbReference type="InterPro" id="IPR017896">
    <property type="entry name" value="4Fe4S_Fe-S-bd"/>
</dbReference>
<dbReference type="InterPro" id="IPR017900">
    <property type="entry name" value="4Fe4S_Fe_S_CS"/>
</dbReference>
<dbReference type="InterPro" id="IPR010226">
    <property type="entry name" value="NADH_quinone_OxRdtase_chainI"/>
</dbReference>
<dbReference type="InterPro" id="IPR004497">
    <property type="entry name" value="NDHI"/>
</dbReference>
<dbReference type="NCBIfam" id="TIGR00403">
    <property type="entry name" value="ndhI"/>
    <property type="match status" value="1"/>
</dbReference>
<dbReference type="NCBIfam" id="TIGR01971">
    <property type="entry name" value="NuoI"/>
    <property type="match status" value="1"/>
</dbReference>
<dbReference type="NCBIfam" id="NF004537">
    <property type="entry name" value="PRK05888.1-3"/>
    <property type="match status" value="1"/>
</dbReference>
<dbReference type="PANTHER" id="PTHR47275">
    <property type="entry name" value="NAD(P)H-QUINONE OXIDOREDUCTASE SUBUNIT I, CHLOROPLASTIC"/>
    <property type="match status" value="1"/>
</dbReference>
<dbReference type="PANTHER" id="PTHR47275:SF1">
    <property type="entry name" value="NAD(P)H-QUINONE OXIDOREDUCTASE SUBUNIT I, CHLOROPLASTIC"/>
    <property type="match status" value="1"/>
</dbReference>
<dbReference type="Pfam" id="PF00037">
    <property type="entry name" value="Fer4"/>
    <property type="match status" value="2"/>
</dbReference>
<dbReference type="SUPFAM" id="SSF54862">
    <property type="entry name" value="4Fe-4S ferredoxins"/>
    <property type="match status" value="1"/>
</dbReference>
<dbReference type="PROSITE" id="PS00198">
    <property type="entry name" value="4FE4S_FER_1"/>
    <property type="match status" value="2"/>
</dbReference>
<dbReference type="PROSITE" id="PS51379">
    <property type="entry name" value="4FE4S_FER_2"/>
    <property type="match status" value="2"/>
</dbReference>
<proteinExistence type="inferred from homology"/>
<geneLocation type="chloroplast"/>
<sequence>MFPMVTEFMNYGQQTVRAARYIGQGFMITLSHANRLPVTIQYPYEKLITSERFRGRIHFEFDKCIACEVCVRVCPIDLPVVDWKLETDIRKKRLLNYSIDFGICIFCGNCVEYCPTNCLSMTEEYELSTYDRHELNYNQIALGRLPMSIIDDYTIRTILNLPEIKT</sequence>
<comment type="function">
    <text evidence="1">NDH shuttles electrons from NAD(P)H:plastoquinone, via FMN and iron-sulfur (Fe-S) centers, to quinones in the photosynthetic chain and possibly in a chloroplast respiratory chain. The immediate electron acceptor for the enzyme in this species is believed to be plastoquinone. Couples the redox reaction to proton translocation, and thus conserves the redox energy in a proton gradient.</text>
</comment>
<comment type="catalytic activity">
    <reaction evidence="1">
        <text>a plastoquinone + NADH + (n+1) H(+)(in) = a plastoquinol + NAD(+) + n H(+)(out)</text>
        <dbReference type="Rhea" id="RHEA:42608"/>
        <dbReference type="Rhea" id="RHEA-COMP:9561"/>
        <dbReference type="Rhea" id="RHEA-COMP:9562"/>
        <dbReference type="ChEBI" id="CHEBI:15378"/>
        <dbReference type="ChEBI" id="CHEBI:17757"/>
        <dbReference type="ChEBI" id="CHEBI:57540"/>
        <dbReference type="ChEBI" id="CHEBI:57945"/>
        <dbReference type="ChEBI" id="CHEBI:62192"/>
    </reaction>
</comment>
<comment type="catalytic activity">
    <reaction evidence="1">
        <text>a plastoquinone + NADPH + (n+1) H(+)(in) = a plastoquinol + NADP(+) + n H(+)(out)</text>
        <dbReference type="Rhea" id="RHEA:42612"/>
        <dbReference type="Rhea" id="RHEA-COMP:9561"/>
        <dbReference type="Rhea" id="RHEA-COMP:9562"/>
        <dbReference type="ChEBI" id="CHEBI:15378"/>
        <dbReference type="ChEBI" id="CHEBI:17757"/>
        <dbReference type="ChEBI" id="CHEBI:57783"/>
        <dbReference type="ChEBI" id="CHEBI:58349"/>
        <dbReference type="ChEBI" id="CHEBI:62192"/>
    </reaction>
</comment>
<comment type="cofactor">
    <cofactor evidence="1">
        <name>[4Fe-4S] cluster</name>
        <dbReference type="ChEBI" id="CHEBI:49883"/>
    </cofactor>
    <text evidence="1">Binds 2 [4Fe-4S] clusters per subunit.</text>
</comment>
<comment type="subunit">
    <text evidence="1">NDH is composed of at least 16 different subunits, 5 of which are encoded in the nucleus.</text>
</comment>
<comment type="subcellular location">
    <subcellularLocation>
        <location evidence="1">Plastid</location>
        <location evidence="1">Chloroplast thylakoid membrane</location>
        <topology evidence="1">Peripheral membrane protein</topology>
    </subcellularLocation>
</comment>
<comment type="similarity">
    <text evidence="1">Belongs to the complex I 23 kDa subunit family.</text>
</comment>
<name>NDHI_VARMX</name>
<accession>Q8HVJ8</accession>
<keyword id="KW-0004">4Fe-4S</keyword>
<keyword id="KW-0150">Chloroplast</keyword>
<keyword id="KW-0408">Iron</keyword>
<keyword id="KW-0411">Iron-sulfur</keyword>
<keyword id="KW-0472">Membrane</keyword>
<keyword id="KW-0479">Metal-binding</keyword>
<keyword id="KW-0520">NAD</keyword>
<keyword id="KW-0521">NADP</keyword>
<keyword id="KW-0934">Plastid</keyword>
<keyword id="KW-0618">Plastoquinone</keyword>
<keyword id="KW-0874">Quinone</keyword>
<keyword id="KW-0677">Repeat</keyword>
<keyword id="KW-0793">Thylakoid</keyword>
<keyword id="KW-1278">Translocase</keyword>
<gene>
    <name evidence="1" type="primary">ndhI</name>
</gene>
<feature type="chain" id="PRO_0000245678" description="NAD(P)H-quinone oxidoreductase subunit I, chloroplastic">
    <location>
        <begin position="1"/>
        <end position="166"/>
    </location>
</feature>
<feature type="domain" description="4Fe-4S ferredoxin-type 1" evidence="1">
    <location>
        <begin position="55"/>
        <end position="84"/>
    </location>
</feature>
<feature type="domain" description="4Fe-4S ferredoxin-type 2" evidence="1">
    <location>
        <begin position="95"/>
        <end position="124"/>
    </location>
</feature>
<feature type="binding site" evidence="1">
    <location>
        <position position="64"/>
    </location>
    <ligand>
        <name>[4Fe-4S] cluster</name>
        <dbReference type="ChEBI" id="CHEBI:49883"/>
        <label>1</label>
    </ligand>
</feature>
<feature type="binding site" evidence="1">
    <location>
        <position position="67"/>
    </location>
    <ligand>
        <name>[4Fe-4S] cluster</name>
        <dbReference type="ChEBI" id="CHEBI:49883"/>
        <label>1</label>
    </ligand>
</feature>
<feature type="binding site" evidence="1">
    <location>
        <position position="70"/>
    </location>
    <ligand>
        <name>[4Fe-4S] cluster</name>
        <dbReference type="ChEBI" id="CHEBI:49883"/>
        <label>1</label>
    </ligand>
</feature>
<feature type="binding site" evidence="1">
    <location>
        <position position="74"/>
    </location>
    <ligand>
        <name>[4Fe-4S] cluster</name>
        <dbReference type="ChEBI" id="CHEBI:49883"/>
        <label>2</label>
    </ligand>
</feature>
<feature type="binding site" evidence="1">
    <location>
        <position position="104"/>
    </location>
    <ligand>
        <name>[4Fe-4S] cluster</name>
        <dbReference type="ChEBI" id="CHEBI:49883"/>
        <label>2</label>
    </ligand>
</feature>
<feature type="binding site" evidence="1">
    <location>
        <position position="107"/>
    </location>
    <ligand>
        <name>[4Fe-4S] cluster</name>
        <dbReference type="ChEBI" id="CHEBI:49883"/>
        <label>2</label>
    </ligand>
</feature>
<feature type="binding site" evidence="1">
    <location>
        <position position="110"/>
    </location>
    <ligand>
        <name>[4Fe-4S] cluster</name>
        <dbReference type="ChEBI" id="CHEBI:49883"/>
        <label>2</label>
    </ligand>
</feature>
<feature type="binding site" evidence="1">
    <location>
        <position position="114"/>
    </location>
    <ligand>
        <name>[4Fe-4S] cluster</name>
        <dbReference type="ChEBI" id="CHEBI:49883"/>
        <label>1</label>
    </ligand>
</feature>